<accession>B7M7M1</accession>
<protein>
    <recommendedName>
        <fullName evidence="1">Dual-specificity RNA methyltransferase RlmN</fullName>
        <ecNumber evidence="1">2.1.1.192</ecNumber>
    </recommendedName>
    <alternativeName>
        <fullName evidence="1">23S rRNA (adenine(2503)-C(2))-methyltransferase</fullName>
    </alternativeName>
    <alternativeName>
        <fullName evidence="1">23S rRNA m2A2503 methyltransferase</fullName>
    </alternativeName>
    <alternativeName>
        <fullName evidence="1">Ribosomal RNA large subunit methyltransferase N</fullName>
    </alternativeName>
    <alternativeName>
        <fullName evidence="1">tRNA (adenine(37)-C(2))-methyltransferase</fullName>
    </alternativeName>
    <alternativeName>
        <fullName evidence="1">tRNA m2A37 methyltransferase</fullName>
    </alternativeName>
</protein>
<proteinExistence type="inferred from homology"/>
<feature type="chain" id="PRO_1000188574" description="Dual-specificity RNA methyltransferase RlmN">
    <location>
        <begin position="1"/>
        <end position="384"/>
    </location>
</feature>
<feature type="domain" description="Radical SAM core" evidence="2">
    <location>
        <begin position="111"/>
        <end position="350"/>
    </location>
</feature>
<feature type="active site" description="Proton acceptor" evidence="1">
    <location>
        <position position="105"/>
    </location>
</feature>
<feature type="active site" description="S-methylcysteine intermediate" evidence="1">
    <location>
        <position position="355"/>
    </location>
</feature>
<feature type="binding site" evidence="1">
    <location>
        <position position="125"/>
    </location>
    <ligand>
        <name>[4Fe-4S] cluster</name>
        <dbReference type="ChEBI" id="CHEBI:49883"/>
        <note>4Fe-4S-S-AdoMet</note>
    </ligand>
</feature>
<feature type="binding site" evidence="1">
    <location>
        <position position="129"/>
    </location>
    <ligand>
        <name>[4Fe-4S] cluster</name>
        <dbReference type="ChEBI" id="CHEBI:49883"/>
        <note>4Fe-4S-S-AdoMet</note>
    </ligand>
</feature>
<feature type="binding site" evidence="1">
    <location>
        <position position="132"/>
    </location>
    <ligand>
        <name>[4Fe-4S] cluster</name>
        <dbReference type="ChEBI" id="CHEBI:49883"/>
        <note>4Fe-4S-S-AdoMet</note>
    </ligand>
</feature>
<feature type="binding site" evidence="1">
    <location>
        <begin position="179"/>
        <end position="180"/>
    </location>
    <ligand>
        <name>S-adenosyl-L-methionine</name>
        <dbReference type="ChEBI" id="CHEBI:59789"/>
    </ligand>
</feature>
<feature type="binding site" evidence="1">
    <location>
        <position position="211"/>
    </location>
    <ligand>
        <name>S-adenosyl-L-methionine</name>
        <dbReference type="ChEBI" id="CHEBI:59789"/>
    </ligand>
</feature>
<feature type="binding site" evidence="1">
    <location>
        <begin position="233"/>
        <end position="235"/>
    </location>
    <ligand>
        <name>S-adenosyl-L-methionine</name>
        <dbReference type="ChEBI" id="CHEBI:59789"/>
    </ligand>
</feature>
<feature type="binding site" evidence="1">
    <location>
        <position position="312"/>
    </location>
    <ligand>
        <name>S-adenosyl-L-methionine</name>
        <dbReference type="ChEBI" id="CHEBI:59789"/>
    </ligand>
</feature>
<feature type="disulfide bond" description="(transient)" evidence="1">
    <location>
        <begin position="118"/>
        <end position="355"/>
    </location>
</feature>
<organism>
    <name type="scientific">Escherichia coli O8 (strain IAI1)</name>
    <dbReference type="NCBI Taxonomy" id="585034"/>
    <lineage>
        <taxon>Bacteria</taxon>
        <taxon>Pseudomonadati</taxon>
        <taxon>Pseudomonadota</taxon>
        <taxon>Gammaproteobacteria</taxon>
        <taxon>Enterobacterales</taxon>
        <taxon>Enterobacteriaceae</taxon>
        <taxon>Escherichia</taxon>
    </lineage>
</organism>
<evidence type="ECO:0000255" key="1">
    <source>
        <dbReference type="HAMAP-Rule" id="MF_01849"/>
    </source>
</evidence>
<evidence type="ECO:0000255" key="2">
    <source>
        <dbReference type="PROSITE-ProRule" id="PRU01266"/>
    </source>
</evidence>
<sequence>MSEQLVTPENVTTKDGKINLLDLNRQQMREFFKDLGEKPFRADQVMKWMYHYCCDNFDEMTDINKVLRGKLKEVAEIRAPEVVEEQRSSDGTIKWAIAVGDQRVETVYIPEDDRATLCVSSQVGCALECKFCSTAQQGFNRNLRVSEIIGQVWRAAKIVGAAKVTGQRPITNVVMMGMGEPLLNLNNVVPAMEIMLDDFGFGLSKRRVTLSTSGVVPALDKLGDMIDVALAISLHAPNDEIRDEIVPINKKYNIETFLAAVRRYLEKSNANQGRVTIEYVMLDHVNDGTEHAHQLAELLKDTPCKINLIPWNPFPGAPYGRSSNSRIDRFSKVLMSYGFTTIVRKTRGDDIDAACGQLAGDVIDRTKRTLRKRMQGEAIDIKAV</sequence>
<gene>
    <name evidence="1" type="primary">rlmN</name>
    <name type="ordered locus">ECIAI1_2569</name>
</gene>
<reference key="1">
    <citation type="journal article" date="2009" name="PLoS Genet.">
        <title>Organised genome dynamics in the Escherichia coli species results in highly diverse adaptive paths.</title>
        <authorList>
            <person name="Touchon M."/>
            <person name="Hoede C."/>
            <person name="Tenaillon O."/>
            <person name="Barbe V."/>
            <person name="Baeriswyl S."/>
            <person name="Bidet P."/>
            <person name="Bingen E."/>
            <person name="Bonacorsi S."/>
            <person name="Bouchier C."/>
            <person name="Bouvet O."/>
            <person name="Calteau A."/>
            <person name="Chiapello H."/>
            <person name="Clermont O."/>
            <person name="Cruveiller S."/>
            <person name="Danchin A."/>
            <person name="Diard M."/>
            <person name="Dossat C."/>
            <person name="Karoui M.E."/>
            <person name="Frapy E."/>
            <person name="Garry L."/>
            <person name="Ghigo J.M."/>
            <person name="Gilles A.M."/>
            <person name="Johnson J."/>
            <person name="Le Bouguenec C."/>
            <person name="Lescat M."/>
            <person name="Mangenot S."/>
            <person name="Martinez-Jehanne V."/>
            <person name="Matic I."/>
            <person name="Nassif X."/>
            <person name="Oztas S."/>
            <person name="Petit M.A."/>
            <person name="Pichon C."/>
            <person name="Rouy Z."/>
            <person name="Ruf C.S."/>
            <person name="Schneider D."/>
            <person name="Tourret J."/>
            <person name="Vacherie B."/>
            <person name="Vallenet D."/>
            <person name="Medigue C."/>
            <person name="Rocha E.P.C."/>
            <person name="Denamur E."/>
        </authorList>
    </citation>
    <scope>NUCLEOTIDE SEQUENCE [LARGE SCALE GENOMIC DNA]</scope>
    <source>
        <strain>IAI1</strain>
    </source>
</reference>
<name>RLMN_ECO8A</name>
<comment type="function">
    <text evidence="1">Specifically methylates position 2 of adenine 2503 in 23S rRNA and position 2 of adenine 37 in tRNAs. m2A2503 modification seems to play a crucial role in the proofreading step occurring at the peptidyl transferase center and thus would serve to optimize ribosomal fidelity.</text>
</comment>
<comment type="catalytic activity">
    <reaction evidence="1">
        <text>adenosine(2503) in 23S rRNA + 2 reduced [2Fe-2S]-[ferredoxin] + 2 S-adenosyl-L-methionine = 2-methyladenosine(2503) in 23S rRNA + 5'-deoxyadenosine + L-methionine + 2 oxidized [2Fe-2S]-[ferredoxin] + S-adenosyl-L-homocysteine</text>
        <dbReference type="Rhea" id="RHEA:42916"/>
        <dbReference type="Rhea" id="RHEA-COMP:10000"/>
        <dbReference type="Rhea" id="RHEA-COMP:10001"/>
        <dbReference type="Rhea" id="RHEA-COMP:10152"/>
        <dbReference type="Rhea" id="RHEA-COMP:10282"/>
        <dbReference type="ChEBI" id="CHEBI:17319"/>
        <dbReference type="ChEBI" id="CHEBI:33737"/>
        <dbReference type="ChEBI" id="CHEBI:33738"/>
        <dbReference type="ChEBI" id="CHEBI:57844"/>
        <dbReference type="ChEBI" id="CHEBI:57856"/>
        <dbReference type="ChEBI" id="CHEBI:59789"/>
        <dbReference type="ChEBI" id="CHEBI:74411"/>
        <dbReference type="ChEBI" id="CHEBI:74497"/>
        <dbReference type="EC" id="2.1.1.192"/>
    </reaction>
</comment>
<comment type="catalytic activity">
    <reaction evidence="1">
        <text>adenosine(37) in tRNA + 2 reduced [2Fe-2S]-[ferredoxin] + 2 S-adenosyl-L-methionine = 2-methyladenosine(37) in tRNA + 5'-deoxyadenosine + L-methionine + 2 oxidized [2Fe-2S]-[ferredoxin] + S-adenosyl-L-homocysteine</text>
        <dbReference type="Rhea" id="RHEA:43332"/>
        <dbReference type="Rhea" id="RHEA-COMP:10000"/>
        <dbReference type="Rhea" id="RHEA-COMP:10001"/>
        <dbReference type="Rhea" id="RHEA-COMP:10162"/>
        <dbReference type="Rhea" id="RHEA-COMP:10485"/>
        <dbReference type="ChEBI" id="CHEBI:17319"/>
        <dbReference type="ChEBI" id="CHEBI:33737"/>
        <dbReference type="ChEBI" id="CHEBI:33738"/>
        <dbReference type="ChEBI" id="CHEBI:57844"/>
        <dbReference type="ChEBI" id="CHEBI:57856"/>
        <dbReference type="ChEBI" id="CHEBI:59789"/>
        <dbReference type="ChEBI" id="CHEBI:74411"/>
        <dbReference type="ChEBI" id="CHEBI:74497"/>
        <dbReference type="EC" id="2.1.1.192"/>
    </reaction>
</comment>
<comment type="cofactor">
    <cofactor evidence="1">
        <name>[4Fe-4S] cluster</name>
        <dbReference type="ChEBI" id="CHEBI:49883"/>
    </cofactor>
    <text evidence="1">Binds 1 [4Fe-4S] cluster. The cluster is coordinated with 3 cysteines and an exchangeable S-adenosyl-L-methionine.</text>
</comment>
<comment type="subcellular location">
    <subcellularLocation>
        <location evidence="1">Cytoplasm</location>
    </subcellularLocation>
</comment>
<comment type="miscellaneous">
    <text evidence="1">Reaction proceeds by a ping-pong mechanism involving intermediate methylation of a conserved cysteine residue.</text>
</comment>
<comment type="similarity">
    <text evidence="1">Belongs to the radical SAM superfamily. RlmN family.</text>
</comment>
<keyword id="KW-0004">4Fe-4S</keyword>
<keyword id="KW-0963">Cytoplasm</keyword>
<keyword id="KW-1015">Disulfide bond</keyword>
<keyword id="KW-0408">Iron</keyword>
<keyword id="KW-0411">Iron-sulfur</keyword>
<keyword id="KW-0479">Metal-binding</keyword>
<keyword id="KW-0489">Methyltransferase</keyword>
<keyword id="KW-0698">rRNA processing</keyword>
<keyword id="KW-0949">S-adenosyl-L-methionine</keyword>
<keyword id="KW-0808">Transferase</keyword>
<keyword id="KW-0819">tRNA processing</keyword>
<dbReference type="EC" id="2.1.1.192" evidence="1"/>
<dbReference type="EMBL" id="CU928160">
    <property type="protein sequence ID" value="CAQ99409.1"/>
    <property type="molecule type" value="Genomic_DNA"/>
</dbReference>
<dbReference type="RefSeq" id="WP_000003317.1">
    <property type="nucleotide sequence ID" value="NC_011741.1"/>
</dbReference>
<dbReference type="SMR" id="B7M7M1"/>
<dbReference type="KEGG" id="ecr:ECIAI1_2569"/>
<dbReference type="HOGENOM" id="CLU_029101_0_0_6"/>
<dbReference type="GO" id="GO:0005737">
    <property type="term" value="C:cytoplasm"/>
    <property type="evidence" value="ECO:0007669"/>
    <property type="project" value="UniProtKB-SubCell"/>
</dbReference>
<dbReference type="GO" id="GO:0051539">
    <property type="term" value="F:4 iron, 4 sulfur cluster binding"/>
    <property type="evidence" value="ECO:0007669"/>
    <property type="project" value="UniProtKB-UniRule"/>
</dbReference>
<dbReference type="GO" id="GO:0046872">
    <property type="term" value="F:metal ion binding"/>
    <property type="evidence" value="ECO:0007669"/>
    <property type="project" value="UniProtKB-KW"/>
</dbReference>
<dbReference type="GO" id="GO:0070040">
    <property type="term" value="F:rRNA (adenine(2503)-C2-)-methyltransferase activity"/>
    <property type="evidence" value="ECO:0007669"/>
    <property type="project" value="UniProtKB-UniRule"/>
</dbReference>
<dbReference type="GO" id="GO:0019843">
    <property type="term" value="F:rRNA binding"/>
    <property type="evidence" value="ECO:0007669"/>
    <property type="project" value="UniProtKB-UniRule"/>
</dbReference>
<dbReference type="GO" id="GO:0002935">
    <property type="term" value="F:tRNA (adenine(37)-C2)-methyltransferase activity"/>
    <property type="evidence" value="ECO:0007669"/>
    <property type="project" value="UniProtKB-UniRule"/>
</dbReference>
<dbReference type="GO" id="GO:0000049">
    <property type="term" value="F:tRNA binding"/>
    <property type="evidence" value="ECO:0007669"/>
    <property type="project" value="UniProtKB-UniRule"/>
</dbReference>
<dbReference type="GO" id="GO:0070475">
    <property type="term" value="P:rRNA base methylation"/>
    <property type="evidence" value="ECO:0007669"/>
    <property type="project" value="UniProtKB-UniRule"/>
</dbReference>
<dbReference type="GO" id="GO:0030488">
    <property type="term" value="P:tRNA methylation"/>
    <property type="evidence" value="ECO:0007669"/>
    <property type="project" value="UniProtKB-UniRule"/>
</dbReference>
<dbReference type="CDD" id="cd01335">
    <property type="entry name" value="Radical_SAM"/>
    <property type="match status" value="1"/>
</dbReference>
<dbReference type="FunFam" id="1.10.150.530:FF:000001">
    <property type="entry name" value="Dual-specificity RNA methyltransferase RlmN"/>
    <property type="match status" value="1"/>
</dbReference>
<dbReference type="FunFam" id="3.20.20.70:FF:000008">
    <property type="entry name" value="Dual-specificity RNA methyltransferase RlmN"/>
    <property type="match status" value="1"/>
</dbReference>
<dbReference type="Gene3D" id="1.10.150.530">
    <property type="match status" value="1"/>
</dbReference>
<dbReference type="Gene3D" id="3.20.20.70">
    <property type="entry name" value="Aldolase class I"/>
    <property type="match status" value="1"/>
</dbReference>
<dbReference type="HAMAP" id="MF_01849">
    <property type="entry name" value="RNA_methyltr_RlmN"/>
    <property type="match status" value="1"/>
</dbReference>
<dbReference type="InterPro" id="IPR013785">
    <property type="entry name" value="Aldolase_TIM"/>
</dbReference>
<dbReference type="InterPro" id="IPR040072">
    <property type="entry name" value="Methyltransferase_A"/>
</dbReference>
<dbReference type="InterPro" id="IPR048641">
    <property type="entry name" value="RlmN_N"/>
</dbReference>
<dbReference type="InterPro" id="IPR027492">
    <property type="entry name" value="RNA_MTrfase_RlmN"/>
</dbReference>
<dbReference type="InterPro" id="IPR004383">
    <property type="entry name" value="rRNA_lsu_MTrfase_RlmN/Cfr"/>
</dbReference>
<dbReference type="InterPro" id="IPR007197">
    <property type="entry name" value="rSAM"/>
</dbReference>
<dbReference type="NCBIfam" id="NF008396">
    <property type="entry name" value="PRK11194.1"/>
    <property type="match status" value="1"/>
</dbReference>
<dbReference type="NCBIfam" id="TIGR00048">
    <property type="entry name" value="rRNA_mod_RlmN"/>
    <property type="match status" value="1"/>
</dbReference>
<dbReference type="PANTHER" id="PTHR30544">
    <property type="entry name" value="23S RRNA METHYLTRANSFERASE"/>
    <property type="match status" value="1"/>
</dbReference>
<dbReference type="PANTHER" id="PTHR30544:SF5">
    <property type="entry name" value="RADICAL SAM CORE DOMAIN-CONTAINING PROTEIN"/>
    <property type="match status" value="1"/>
</dbReference>
<dbReference type="Pfam" id="PF04055">
    <property type="entry name" value="Radical_SAM"/>
    <property type="match status" value="1"/>
</dbReference>
<dbReference type="Pfam" id="PF21016">
    <property type="entry name" value="RlmN_N"/>
    <property type="match status" value="1"/>
</dbReference>
<dbReference type="PIRSF" id="PIRSF006004">
    <property type="entry name" value="CHP00048"/>
    <property type="match status" value="1"/>
</dbReference>
<dbReference type="SFLD" id="SFLDF00275">
    <property type="entry name" value="adenosine_C2_methyltransferase"/>
    <property type="match status" value="1"/>
</dbReference>
<dbReference type="SFLD" id="SFLDG01062">
    <property type="entry name" value="methyltransferase_(Class_A)"/>
    <property type="match status" value="1"/>
</dbReference>
<dbReference type="SUPFAM" id="SSF102114">
    <property type="entry name" value="Radical SAM enzymes"/>
    <property type="match status" value="1"/>
</dbReference>
<dbReference type="PROSITE" id="PS51918">
    <property type="entry name" value="RADICAL_SAM"/>
    <property type="match status" value="1"/>
</dbReference>